<feature type="initiator methionine" description="Removed" evidence="20">
    <location>
        <position position="1"/>
    </location>
</feature>
<feature type="chain" id="PRO_0000082652" description="Ras-related protein R-Ras2">
    <location>
        <begin position="2"/>
        <end position="201"/>
    </location>
</feature>
<feature type="propeptide" id="PRO_0000281302" description="Removed in mature form" evidence="2">
    <location>
        <begin position="202"/>
        <end position="204"/>
    </location>
</feature>
<feature type="short sequence motif" description="Effector region">
    <location>
        <begin position="43"/>
        <end position="51"/>
    </location>
</feature>
<feature type="binding site" evidence="9 15">
    <location>
        <begin position="21"/>
        <end position="29"/>
    </location>
    <ligand>
        <name>GTP</name>
        <dbReference type="ChEBI" id="CHEBI:37565"/>
    </ligand>
</feature>
<feature type="binding site" evidence="1">
    <location>
        <begin position="68"/>
        <end position="72"/>
    </location>
    <ligand>
        <name>GTP</name>
        <dbReference type="ChEBI" id="CHEBI:37565"/>
    </ligand>
</feature>
<feature type="binding site" evidence="9 15">
    <location>
        <begin position="127"/>
        <end position="130"/>
    </location>
    <ligand>
        <name>GTP</name>
        <dbReference type="ChEBI" id="CHEBI:37565"/>
    </ligand>
</feature>
<feature type="binding site" evidence="9 15">
    <location>
        <begin position="157"/>
        <end position="159"/>
    </location>
    <ligand>
        <name>GTP</name>
        <dbReference type="ChEBI" id="CHEBI:37565"/>
    </ligand>
</feature>
<feature type="modified residue" description="N-acetylalanine" evidence="20">
    <location>
        <position position="2"/>
    </location>
</feature>
<feature type="modified residue" description="Phosphoserine" evidence="16 17 18 19 21 22 23">
    <location>
        <position position="186"/>
    </location>
</feature>
<feature type="modified residue" description="Cysteine methyl ester" evidence="12">
    <location>
        <position position="201"/>
    </location>
</feature>
<feature type="lipid moiety-binding region" description="N6-palmitoyl lysine" evidence="13">
    <location>
        <position position="192"/>
    </location>
</feature>
<feature type="lipid moiety-binding region" description="N6-palmitoyl lysine" evidence="13">
    <location>
        <position position="194"/>
    </location>
</feature>
<feature type="lipid moiety-binding region" description="N6-palmitoyl lysine" evidence="13">
    <location>
        <position position="196"/>
    </location>
</feature>
<feature type="lipid moiety-binding region" description="N6-palmitoyl lysine" evidence="13">
    <location>
        <position position="197"/>
    </location>
</feature>
<feature type="lipid moiety-binding region" description="S-palmitoyl cysteine" evidence="4">
    <location>
        <position position="199"/>
    </location>
</feature>
<feature type="lipid moiety-binding region" description="S-farnesyl cysteine" evidence="3">
    <location>
        <position position="201"/>
    </location>
</feature>
<feature type="splice variant" id="VSP_043066" description="In isoform 2." evidence="10">
    <location>
        <begin position="1"/>
        <end position="77"/>
    </location>
</feature>
<feature type="splice variant" id="VSP_044485" description="In isoform 3." evidence="10">
    <original>MAAAGWRDGSGQEKYRLVVVGGGGVGKSALTIQFIQ</original>
    <variation>M</variation>
    <location>
        <begin position="1"/>
        <end position="36"/>
    </location>
</feature>
<feature type="splice variant" id="VSP_055842" description="In isoform 4." evidence="10">
    <original>Q</original>
    <variation>QFFLFLQ</variation>
    <location>
        <position position="36"/>
    </location>
</feature>
<feature type="sequence variant" id="VAR_083149" description="In NS12; increased MAPK signaling; dbSNP:rs1591495779." evidence="5">
    <original>G</original>
    <variation>V</variation>
    <location>
        <position position="23"/>
    </location>
</feature>
<feature type="sequence variant" id="VAR_083150" description="In NS12; increased MAPK signaling." evidence="5">
    <original>G</original>
    <variation>GGGG</variation>
    <location>
        <position position="24"/>
    </location>
</feature>
<feature type="sequence variant" id="VAR_083151" description="In NS12; increased MAPK signaling; results in craniofacial patterning defects when expressed in zebrafish." evidence="5 6">
    <original>G</original>
    <variation>GGVG</variation>
    <location>
        <position position="26"/>
    </location>
</feature>
<feature type="sequence variant" id="VAR_083152" description="In NS12; decreased GAP-stimulated GTPase activity leading to an accumulation of RRAS2 in its GTP-bound active state; increased MAPK signaling; loss of interaction with RASSF5; dbSNP:rs782457908." evidence="5">
    <original>A</original>
    <variation>T</variation>
    <location>
        <position position="70"/>
    </location>
</feature>
<feature type="sequence variant" id="VAR_083153" description="In NS12; associated in cis with C-75; increased MAPK signaling; results in craniofacial patterning defects when expressed in zebrafish; results in craniofacial patterning defects in zebrafish when associated with C-75." evidence="6">
    <original>Q</original>
    <variation>H</variation>
    <location>
        <position position="72"/>
    </location>
</feature>
<feature type="sequence variant" id="VAR_006848" description="In NS12; also found as somatic mutation in ovarian cancer; increased MAPK signaling; results in craniofacial patterning defects when expressed in zebrafish; dbSNP:rs113954997." evidence="5 6 8">
    <original>Q</original>
    <variation>L</variation>
    <location>
        <position position="72"/>
    </location>
</feature>
<feature type="sequence variant" id="VAR_083154" description="Likely benign; associated in cis with H-72 in a patient with Noonan syndrome; has no effect on MAPK signaling; has no effect on craniofacial patterning when expressed in zebrafish; results in craniofacial patterning defects in zebrafish when associated with H-72." evidence="6">
    <original>F</original>
    <variation>C</variation>
    <location>
        <position position="75"/>
    </location>
</feature>
<feature type="mutagenesis site" description="Strongly decreased lysine fatty-acylation." evidence="4">
    <original>KEKDKK</original>
    <variation>RERDRR</variation>
    <location>
        <begin position="192"/>
        <end position="197"/>
    </location>
</feature>
<feature type="mutagenesis site" description="Does not affect lysine fatty-acylation." evidence="4">
    <original>C</original>
    <variation>S</variation>
    <location>
        <position position="199"/>
    </location>
</feature>
<feature type="strand" evidence="24">
    <location>
        <begin position="14"/>
        <end position="21"/>
    </location>
</feature>
<feature type="helix" evidence="24">
    <location>
        <begin position="27"/>
        <end position="36"/>
    </location>
</feature>
<feature type="strand" evidence="24">
    <location>
        <begin position="49"/>
        <end position="57"/>
    </location>
</feature>
<feature type="strand" evidence="24">
    <location>
        <begin position="60"/>
        <end position="68"/>
    </location>
</feature>
<feature type="helix" evidence="24">
    <location>
        <begin position="77"/>
        <end position="85"/>
    </location>
</feature>
<feature type="strand" evidence="24">
    <location>
        <begin position="87"/>
        <end position="94"/>
    </location>
</feature>
<feature type="helix" evidence="24">
    <location>
        <begin position="98"/>
        <end position="102"/>
    </location>
</feature>
<feature type="helix" evidence="24">
    <location>
        <begin position="104"/>
        <end position="115"/>
    </location>
</feature>
<feature type="strand" evidence="24">
    <location>
        <begin position="121"/>
        <end position="127"/>
    </location>
</feature>
<feature type="helix" evidence="24">
    <location>
        <begin position="139"/>
        <end position="148"/>
    </location>
</feature>
<feature type="strand" evidence="24">
    <location>
        <begin position="152"/>
        <end position="155"/>
    </location>
</feature>
<feature type="turn" evidence="24">
    <location>
        <begin position="158"/>
        <end position="161"/>
    </location>
</feature>
<feature type="helix" evidence="24">
    <location>
        <begin position="164"/>
        <end position="178"/>
    </location>
</feature>
<organism>
    <name type="scientific">Homo sapiens</name>
    <name type="common">Human</name>
    <dbReference type="NCBI Taxonomy" id="9606"/>
    <lineage>
        <taxon>Eukaryota</taxon>
        <taxon>Metazoa</taxon>
        <taxon>Chordata</taxon>
        <taxon>Craniata</taxon>
        <taxon>Vertebrata</taxon>
        <taxon>Euteleostomi</taxon>
        <taxon>Mammalia</taxon>
        <taxon>Eutheria</taxon>
        <taxon>Euarchontoglires</taxon>
        <taxon>Primates</taxon>
        <taxon>Haplorrhini</taxon>
        <taxon>Catarrhini</taxon>
        <taxon>Hominidae</taxon>
        <taxon>Homo</taxon>
    </lineage>
</organism>
<dbReference type="EC" id="3.6.5.2" evidence="5 7"/>
<dbReference type="EMBL" id="M31468">
    <property type="protein sequence ID" value="AAA36545.1"/>
    <property type="status" value="ALT_FRAME"/>
    <property type="molecule type" value="mRNA"/>
</dbReference>
<dbReference type="EMBL" id="AF493924">
    <property type="protein sequence ID" value="AAM12638.1"/>
    <property type="status" value="ALT_FRAME"/>
    <property type="molecule type" value="mRNA"/>
</dbReference>
<dbReference type="EMBL" id="AK299606">
    <property type="protein sequence ID" value="BAH13078.1"/>
    <property type="molecule type" value="mRNA"/>
</dbReference>
<dbReference type="EMBL" id="AK300103">
    <property type="protein sequence ID" value="BAH13210.1"/>
    <property type="molecule type" value="mRNA"/>
</dbReference>
<dbReference type="EMBL" id="AK302033">
    <property type="protein sequence ID" value="BAH13612.1"/>
    <property type="molecule type" value="mRNA"/>
</dbReference>
<dbReference type="EMBL" id="AK313976">
    <property type="protein sequence ID" value="BAG36690.1"/>
    <property type="molecule type" value="mRNA"/>
</dbReference>
<dbReference type="EMBL" id="AC011084">
    <property type="status" value="NOT_ANNOTATED_CDS"/>
    <property type="molecule type" value="Genomic_DNA"/>
</dbReference>
<dbReference type="EMBL" id="CH471064">
    <property type="protein sequence ID" value="EAW68487.1"/>
    <property type="molecule type" value="Genomic_DNA"/>
</dbReference>
<dbReference type="EMBL" id="BC013106">
    <property type="protein sequence ID" value="AAH13106.1"/>
    <property type="molecule type" value="mRNA"/>
</dbReference>
<dbReference type="CCDS" id="CCDS44544.1">
    <molecule id="P62070-2"/>
</dbReference>
<dbReference type="CCDS" id="CCDS53603.1">
    <molecule id="P62070-3"/>
</dbReference>
<dbReference type="CCDS" id="CCDS7814.1">
    <molecule id="P62070-1"/>
</dbReference>
<dbReference type="PIR" id="B34788">
    <property type="entry name" value="TVHUC2"/>
</dbReference>
<dbReference type="RefSeq" id="NP_001096139.1">
    <molecule id="P62070-2"/>
    <property type="nucleotide sequence ID" value="NM_001102669.2"/>
</dbReference>
<dbReference type="RefSeq" id="NP_001170785.1">
    <molecule id="P62070-3"/>
    <property type="nucleotide sequence ID" value="NM_001177314.2"/>
</dbReference>
<dbReference type="RefSeq" id="NP_001170786.1">
    <molecule id="P62070-2"/>
    <property type="nucleotide sequence ID" value="NM_001177315.1"/>
</dbReference>
<dbReference type="RefSeq" id="NP_036382.2">
    <molecule id="P62070-1"/>
    <property type="nucleotide sequence ID" value="NM_012250.5"/>
</dbReference>
<dbReference type="RefSeq" id="XP_047282523.1">
    <molecule id="P62070-2"/>
    <property type="nucleotide sequence ID" value="XM_047426567.1"/>
</dbReference>
<dbReference type="RefSeq" id="XP_047282524.1">
    <molecule id="P62070-2"/>
    <property type="nucleotide sequence ID" value="XM_047426568.1"/>
</dbReference>
<dbReference type="RefSeq" id="XP_054224024.1">
    <molecule id="P62070-2"/>
    <property type="nucleotide sequence ID" value="XM_054368049.1"/>
</dbReference>
<dbReference type="RefSeq" id="XP_054224025.1">
    <molecule id="P62070-2"/>
    <property type="nucleotide sequence ID" value="XM_054368050.1"/>
</dbReference>
<dbReference type="PDB" id="2ERY">
    <property type="method" value="X-ray"/>
    <property type="resolution" value="1.70 A"/>
    <property type="chains" value="A/B=12-181"/>
</dbReference>
<dbReference type="PDB" id="9B4Q">
    <property type="method" value="X-ray"/>
    <property type="resolution" value="1.46 A"/>
    <property type="chains" value="A=11-179"/>
</dbReference>
<dbReference type="PDB" id="9B4S">
    <property type="method" value="X-ray"/>
    <property type="resolution" value="3.10 A"/>
    <property type="chains" value="B=1-179"/>
</dbReference>
<dbReference type="PDBsum" id="2ERY"/>
<dbReference type="PDBsum" id="9B4Q"/>
<dbReference type="PDBsum" id="9B4S"/>
<dbReference type="SMR" id="P62070"/>
<dbReference type="BioGRID" id="116480">
    <property type="interactions" value="134"/>
</dbReference>
<dbReference type="FunCoup" id="P62070">
    <property type="interactions" value="2349"/>
</dbReference>
<dbReference type="IntAct" id="P62070">
    <property type="interactions" value="72"/>
</dbReference>
<dbReference type="MINT" id="P62070"/>
<dbReference type="STRING" id="9606.ENSP00000256196"/>
<dbReference type="ChEMBL" id="CHEMBL4879446"/>
<dbReference type="GlyGen" id="P62070">
    <property type="glycosylation" value="1 site, 1 O-linked glycan (1 site)"/>
</dbReference>
<dbReference type="iPTMnet" id="P62070"/>
<dbReference type="MetOSite" id="P62070"/>
<dbReference type="PhosphoSitePlus" id="P62070"/>
<dbReference type="SwissPalm" id="P62070"/>
<dbReference type="BioMuta" id="RRAS2"/>
<dbReference type="DMDM" id="49065833"/>
<dbReference type="jPOST" id="P62070"/>
<dbReference type="MassIVE" id="P62070"/>
<dbReference type="PaxDb" id="9606-ENSP00000256196"/>
<dbReference type="PeptideAtlas" id="P62070"/>
<dbReference type="ProteomicsDB" id="57360">
    <molecule id="P62070-1"/>
</dbReference>
<dbReference type="ProteomicsDB" id="57361">
    <molecule id="P62070-2"/>
</dbReference>
<dbReference type="ProteomicsDB" id="6730"/>
<dbReference type="ProteomicsDB" id="6771"/>
<dbReference type="Pumba" id="P62070"/>
<dbReference type="Antibodypedia" id="4173">
    <property type="antibodies" value="268 antibodies from 35 providers"/>
</dbReference>
<dbReference type="DNASU" id="22800"/>
<dbReference type="Ensembl" id="ENST00000256196.9">
    <molecule id="P62070-1"/>
    <property type="protein sequence ID" value="ENSP00000256196.4"/>
    <property type="gene ID" value="ENSG00000133818.14"/>
</dbReference>
<dbReference type="Ensembl" id="ENST00000414023.6">
    <molecule id="P62070-2"/>
    <property type="protein sequence ID" value="ENSP00000403282.2"/>
    <property type="gene ID" value="ENSG00000133818.14"/>
</dbReference>
<dbReference type="Ensembl" id="ENST00000526063.5">
    <molecule id="P62070-2"/>
    <property type="protein sequence ID" value="ENSP00000434104.1"/>
    <property type="gene ID" value="ENSG00000133818.14"/>
</dbReference>
<dbReference type="Ensembl" id="ENST00000529237.5">
    <molecule id="P62070-2"/>
    <property type="protein sequence ID" value="ENSP00000433230.1"/>
    <property type="gene ID" value="ENSG00000133818.14"/>
</dbReference>
<dbReference type="Ensembl" id="ENST00000532814.5">
    <molecule id="P62070-2"/>
    <property type="protein sequence ID" value="ENSP00000431954.1"/>
    <property type="gene ID" value="ENSG00000133818.14"/>
</dbReference>
<dbReference type="Ensembl" id="ENST00000534746.5">
    <molecule id="P62070-2"/>
    <property type="protein sequence ID" value="ENSP00000437083.1"/>
    <property type="gene ID" value="ENSG00000133818.14"/>
</dbReference>
<dbReference type="Ensembl" id="ENST00000537760.5">
    <molecule id="P62070-3"/>
    <property type="protein sequence ID" value="ENSP00000437547.1"/>
    <property type="gene ID" value="ENSG00000133818.14"/>
</dbReference>
<dbReference type="GeneID" id="22800"/>
<dbReference type="KEGG" id="hsa:22800"/>
<dbReference type="MANE-Select" id="ENST00000256196.9">
    <property type="protein sequence ID" value="ENSP00000256196.4"/>
    <property type="RefSeq nucleotide sequence ID" value="NM_012250.6"/>
    <property type="RefSeq protein sequence ID" value="NP_036382.2"/>
</dbReference>
<dbReference type="UCSC" id="uc001mlf.5">
    <molecule id="P62070-1"/>
    <property type="organism name" value="human"/>
</dbReference>
<dbReference type="AGR" id="HGNC:17271"/>
<dbReference type="CTD" id="22800"/>
<dbReference type="DisGeNET" id="22800"/>
<dbReference type="GeneCards" id="RRAS2"/>
<dbReference type="GeneReviews" id="RRAS2"/>
<dbReference type="HGNC" id="HGNC:17271">
    <property type="gene designation" value="RRAS2"/>
</dbReference>
<dbReference type="HPA" id="ENSG00000133818">
    <property type="expression patterns" value="Low tissue specificity"/>
</dbReference>
<dbReference type="MalaCards" id="RRAS2"/>
<dbReference type="MIM" id="167000">
    <property type="type" value="phenotype"/>
</dbReference>
<dbReference type="MIM" id="600098">
    <property type="type" value="gene"/>
</dbReference>
<dbReference type="MIM" id="618624">
    <property type="type" value="phenotype"/>
</dbReference>
<dbReference type="neXtProt" id="NX_P62070"/>
<dbReference type="OpenTargets" id="ENSG00000133818"/>
<dbReference type="Orphanet" id="648">
    <property type="disease" value="Noonan syndrome"/>
</dbReference>
<dbReference type="PharmGKB" id="PA34862"/>
<dbReference type="VEuPathDB" id="HostDB:ENSG00000133818"/>
<dbReference type="eggNOG" id="KOG0395">
    <property type="taxonomic scope" value="Eukaryota"/>
</dbReference>
<dbReference type="GeneTree" id="ENSGT00940000155328"/>
<dbReference type="InParanoid" id="P62070"/>
<dbReference type="OMA" id="NKRGCHC"/>
<dbReference type="OrthoDB" id="5976022at2759"/>
<dbReference type="PAN-GO" id="P62070">
    <property type="GO annotations" value="5 GO annotations based on evolutionary models"/>
</dbReference>
<dbReference type="PhylomeDB" id="P62070"/>
<dbReference type="TreeFam" id="TF312796"/>
<dbReference type="PathwayCommons" id="P62070"/>
<dbReference type="Reactome" id="R-HSA-9696273">
    <property type="pathway name" value="RND1 GTPase cycle"/>
</dbReference>
<dbReference type="SignaLink" id="P62070"/>
<dbReference type="SIGNOR" id="P62070"/>
<dbReference type="BioGRID-ORCS" id="22800">
    <property type="hits" value="26 hits in 1124 CRISPR screens"/>
</dbReference>
<dbReference type="ChiTaRS" id="RRAS2">
    <property type="organism name" value="human"/>
</dbReference>
<dbReference type="EvolutionaryTrace" id="P62070"/>
<dbReference type="GeneWiki" id="RRAS2"/>
<dbReference type="GenomeRNAi" id="22800"/>
<dbReference type="Pharos" id="P62070">
    <property type="development level" value="Tbio"/>
</dbReference>
<dbReference type="PRO" id="PR:P62070"/>
<dbReference type="Proteomes" id="UP000005640">
    <property type="component" value="Chromosome 11"/>
</dbReference>
<dbReference type="RNAct" id="P62070">
    <property type="molecule type" value="protein"/>
</dbReference>
<dbReference type="Bgee" id="ENSG00000133818">
    <property type="expression patterns" value="Expressed in secondary oocyte and 204 other cell types or tissues"/>
</dbReference>
<dbReference type="ExpressionAtlas" id="P62070">
    <property type="expression patterns" value="baseline and differential"/>
</dbReference>
<dbReference type="GO" id="GO:0005783">
    <property type="term" value="C:endoplasmic reticulum"/>
    <property type="evidence" value="ECO:0000303"/>
    <property type="project" value="ProtInc"/>
</dbReference>
<dbReference type="GO" id="GO:0070062">
    <property type="term" value="C:extracellular exosome"/>
    <property type="evidence" value="ECO:0007005"/>
    <property type="project" value="UniProtKB"/>
</dbReference>
<dbReference type="GO" id="GO:0005925">
    <property type="term" value="C:focal adhesion"/>
    <property type="evidence" value="ECO:0007005"/>
    <property type="project" value="UniProtKB"/>
</dbReference>
<dbReference type="GO" id="GO:0000139">
    <property type="term" value="C:Golgi membrane"/>
    <property type="evidence" value="ECO:0007669"/>
    <property type="project" value="UniProtKB-SubCell"/>
</dbReference>
<dbReference type="GO" id="GO:0016020">
    <property type="term" value="C:membrane"/>
    <property type="evidence" value="ECO:0007005"/>
    <property type="project" value="UniProtKB"/>
</dbReference>
<dbReference type="GO" id="GO:0005886">
    <property type="term" value="C:plasma membrane"/>
    <property type="evidence" value="ECO:0000314"/>
    <property type="project" value="UniProt"/>
</dbReference>
<dbReference type="GO" id="GO:0019003">
    <property type="term" value="F:GDP binding"/>
    <property type="evidence" value="ECO:0000318"/>
    <property type="project" value="GO_Central"/>
</dbReference>
<dbReference type="GO" id="GO:0005525">
    <property type="term" value="F:GTP binding"/>
    <property type="evidence" value="ECO:0000318"/>
    <property type="project" value="GO_Central"/>
</dbReference>
<dbReference type="GO" id="GO:0003924">
    <property type="term" value="F:GTPase activity"/>
    <property type="evidence" value="ECO:0000314"/>
    <property type="project" value="UniProt"/>
</dbReference>
<dbReference type="GO" id="GO:0001649">
    <property type="term" value="P:osteoblast differentiation"/>
    <property type="evidence" value="ECO:0007005"/>
    <property type="project" value="UniProtKB"/>
</dbReference>
<dbReference type="GO" id="GO:1900149">
    <property type="term" value="P:positive regulation of Schwann cell migration"/>
    <property type="evidence" value="ECO:0007669"/>
    <property type="project" value="Ensembl"/>
</dbReference>
<dbReference type="GO" id="GO:0007265">
    <property type="term" value="P:Ras protein signal transduction"/>
    <property type="evidence" value="ECO:0000314"/>
    <property type="project" value="UniProt"/>
</dbReference>
<dbReference type="GO" id="GO:0036135">
    <property type="term" value="P:Schwann cell migration"/>
    <property type="evidence" value="ECO:0007669"/>
    <property type="project" value="Ensembl"/>
</dbReference>
<dbReference type="CDD" id="cd04145">
    <property type="entry name" value="M_R_Ras_like"/>
    <property type="match status" value="1"/>
</dbReference>
<dbReference type="FunFam" id="3.40.50.300:FF:000080">
    <property type="entry name" value="Ras-like GTPase Ras1"/>
    <property type="match status" value="1"/>
</dbReference>
<dbReference type="Gene3D" id="3.40.50.300">
    <property type="entry name" value="P-loop containing nucleotide triphosphate hydrolases"/>
    <property type="match status" value="1"/>
</dbReference>
<dbReference type="InterPro" id="IPR027417">
    <property type="entry name" value="P-loop_NTPase"/>
</dbReference>
<dbReference type="InterPro" id="IPR005225">
    <property type="entry name" value="Small_GTP-bd"/>
</dbReference>
<dbReference type="InterPro" id="IPR001806">
    <property type="entry name" value="Small_GTPase"/>
</dbReference>
<dbReference type="InterPro" id="IPR020849">
    <property type="entry name" value="Small_GTPase_Ras-type"/>
</dbReference>
<dbReference type="NCBIfam" id="TIGR00231">
    <property type="entry name" value="small_GTP"/>
    <property type="match status" value="1"/>
</dbReference>
<dbReference type="PANTHER" id="PTHR24070">
    <property type="entry name" value="RAS, DI-RAS, AND RHEB FAMILY MEMBERS OF SMALL GTPASE SUPERFAMILY"/>
    <property type="match status" value="1"/>
</dbReference>
<dbReference type="Pfam" id="PF00071">
    <property type="entry name" value="Ras"/>
    <property type="match status" value="1"/>
</dbReference>
<dbReference type="PRINTS" id="PR00449">
    <property type="entry name" value="RASTRNSFRMNG"/>
</dbReference>
<dbReference type="SMART" id="SM00175">
    <property type="entry name" value="RAB"/>
    <property type="match status" value="1"/>
</dbReference>
<dbReference type="SMART" id="SM00176">
    <property type="entry name" value="RAN"/>
    <property type="match status" value="1"/>
</dbReference>
<dbReference type="SMART" id="SM00173">
    <property type="entry name" value="RAS"/>
    <property type="match status" value="1"/>
</dbReference>
<dbReference type="SMART" id="SM00174">
    <property type="entry name" value="RHO"/>
    <property type="match status" value="1"/>
</dbReference>
<dbReference type="SUPFAM" id="SSF52540">
    <property type="entry name" value="P-loop containing nucleoside triphosphate hydrolases"/>
    <property type="match status" value="1"/>
</dbReference>
<dbReference type="PROSITE" id="PS51421">
    <property type="entry name" value="RAS"/>
    <property type="match status" value="1"/>
</dbReference>
<accession>P62070</accession>
<accession>B2R9Z3</accession>
<accession>B7Z5Z2</accession>
<accession>B7Z6C4</accession>
<accession>B7Z7H6</accession>
<accession>P17082</accession>
<protein>
    <recommendedName>
        <fullName>Ras-related protein R-Ras2</fullName>
        <ecNumber evidence="5 7">3.6.5.2</ecNumber>
    </recommendedName>
    <alternativeName>
        <fullName>Ras-like protein TC21</fullName>
    </alternativeName>
    <alternativeName>
        <fullName>Teratocarcinoma oncogene</fullName>
    </alternativeName>
</protein>
<keyword id="KW-0002">3D-structure</keyword>
<keyword id="KW-0007">Acetylation</keyword>
<keyword id="KW-0025">Alternative splicing</keyword>
<keyword id="KW-1003">Cell membrane</keyword>
<keyword id="KW-0225">Disease variant</keyword>
<keyword id="KW-0333">Golgi apparatus</keyword>
<keyword id="KW-0342">GTP-binding</keyword>
<keyword id="KW-0378">Hydrolase</keyword>
<keyword id="KW-0449">Lipoprotein</keyword>
<keyword id="KW-0472">Membrane</keyword>
<keyword id="KW-0488">Methylation</keyword>
<keyword id="KW-0547">Nucleotide-binding</keyword>
<keyword id="KW-0564">Palmitate</keyword>
<keyword id="KW-0597">Phosphoprotein</keyword>
<keyword id="KW-0636">Prenylation</keyword>
<keyword id="KW-1267">Proteomics identification</keyword>
<keyword id="KW-0656">Proto-oncogene</keyword>
<keyword id="KW-1185">Reference proteome</keyword>
<proteinExistence type="evidence at protein level"/>
<gene>
    <name evidence="14" type="primary">RRAS2</name>
    <name type="synonym">TC21</name>
</gene>
<reference key="1">
    <citation type="journal article" date="1990" name="Mol. Cell. Biol.">
        <title>Characterization of four novel ras-like genes expressed in a human teratocarcinoma cell line.</title>
        <authorList>
            <person name="Drivas G.T."/>
            <person name="Shih A."/>
            <person name="Coutavas E."/>
            <person name="Rush M.G."/>
            <person name="D'Eustachio P."/>
        </authorList>
    </citation>
    <scope>NUCLEOTIDE SEQUENCE [MRNA] (ISOFORM 1)</scope>
</reference>
<reference key="2">
    <citation type="journal article" date="1994" name="Proc. Natl. Acad. Sci. U.S.A.">
        <title>A human oncogene of the RAS superfamily unmasked by expression cDNA cloning.</title>
        <authorList>
            <person name="Chan A.M.-L."/>
            <person name="Miki T."/>
            <person name="Meyers K.A."/>
            <person name="Aaronson S.A."/>
        </authorList>
    </citation>
    <scope>SEQUENCE REVISION TO 5-11</scope>
    <scope>TISSUE SPECIFICITY</scope>
    <scope>VARIANT OVARIAN CANCER LEU-72</scope>
</reference>
<reference key="3">
    <citation type="submission" date="2002-03" db="EMBL/GenBank/DDBJ databases">
        <title>cDNA clones of human proteins involved in signal transduction sequenced by the Guthrie cDNA resource center (www.cdna.org).</title>
        <authorList>
            <person name="Puhl H.L. III"/>
            <person name="Ikeda S.R."/>
            <person name="Aronstam R.S."/>
        </authorList>
    </citation>
    <scope>NUCLEOTIDE SEQUENCE [LARGE SCALE MRNA] (ISOFORM 1)</scope>
    <source>
        <tissue>Heart</tissue>
    </source>
</reference>
<reference key="4">
    <citation type="journal article" date="2004" name="Nat. Genet.">
        <title>Complete sequencing and characterization of 21,243 full-length human cDNAs.</title>
        <authorList>
            <person name="Ota T."/>
            <person name="Suzuki Y."/>
            <person name="Nishikawa T."/>
            <person name="Otsuki T."/>
            <person name="Sugiyama T."/>
            <person name="Irie R."/>
            <person name="Wakamatsu A."/>
            <person name="Hayashi K."/>
            <person name="Sato H."/>
            <person name="Nagai K."/>
            <person name="Kimura K."/>
            <person name="Makita H."/>
            <person name="Sekine M."/>
            <person name="Obayashi M."/>
            <person name="Nishi T."/>
            <person name="Shibahara T."/>
            <person name="Tanaka T."/>
            <person name="Ishii S."/>
            <person name="Yamamoto J."/>
            <person name="Saito K."/>
            <person name="Kawai Y."/>
            <person name="Isono Y."/>
            <person name="Nakamura Y."/>
            <person name="Nagahari K."/>
            <person name="Murakami K."/>
            <person name="Yasuda T."/>
            <person name="Iwayanagi T."/>
            <person name="Wagatsuma M."/>
            <person name="Shiratori A."/>
            <person name="Sudo H."/>
            <person name="Hosoiri T."/>
            <person name="Kaku Y."/>
            <person name="Kodaira H."/>
            <person name="Kondo H."/>
            <person name="Sugawara M."/>
            <person name="Takahashi M."/>
            <person name="Kanda K."/>
            <person name="Yokoi T."/>
            <person name="Furuya T."/>
            <person name="Kikkawa E."/>
            <person name="Omura Y."/>
            <person name="Abe K."/>
            <person name="Kamihara K."/>
            <person name="Katsuta N."/>
            <person name="Sato K."/>
            <person name="Tanikawa M."/>
            <person name="Yamazaki M."/>
            <person name="Ninomiya K."/>
            <person name="Ishibashi T."/>
            <person name="Yamashita H."/>
            <person name="Murakawa K."/>
            <person name="Fujimori K."/>
            <person name="Tanai H."/>
            <person name="Kimata M."/>
            <person name="Watanabe M."/>
            <person name="Hiraoka S."/>
            <person name="Chiba Y."/>
            <person name="Ishida S."/>
            <person name="Ono Y."/>
            <person name="Takiguchi S."/>
            <person name="Watanabe S."/>
            <person name="Yosida M."/>
            <person name="Hotuta T."/>
            <person name="Kusano J."/>
            <person name="Kanehori K."/>
            <person name="Takahashi-Fujii A."/>
            <person name="Hara H."/>
            <person name="Tanase T.-O."/>
            <person name="Nomura Y."/>
            <person name="Togiya S."/>
            <person name="Komai F."/>
            <person name="Hara R."/>
            <person name="Takeuchi K."/>
            <person name="Arita M."/>
            <person name="Imose N."/>
            <person name="Musashino K."/>
            <person name="Yuuki H."/>
            <person name="Oshima A."/>
            <person name="Sasaki N."/>
            <person name="Aotsuka S."/>
            <person name="Yoshikawa Y."/>
            <person name="Matsunawa H."/>
            <person name="Ichihara T."/>
            <person name="Shiohata N."/>
            <person name="Sano S."/>
            <person name="Moriya S."/>
            <person name="Momiyama H."/>
            <person name="Satoh N."/>
            <person name="Takami S."/>
            <person name="Terashima Y."/>
            <person name="Suzuki O."/>
            <person name="Nakagawa S."/>
            <person name="Senoh A."/>
            <person name="Mizoguchi H."/>
            <person name="Goto Y."/>
            <person name="Shimizu F."/>
            <person name="Wakebe H."/>
            <person name="Hishigaki H."/>
            <person name="Watanabe T."/>
            <person name="Sugiyama A."/>
            <person name="Takemoto M."/>
            <person name="Kawakami B."/>
            <person name="Yamazaki M."/>
            <person name="Watanabe K."/>
            <person name="Kumagai A."/>
            <person name="Itakura S."/>
            <person name="Fukuzumi Y."/>
            <person name="Fujimori Y."/>
            <person name="Komiyama M."/>
            <person name="Tashiro H."/>
            <person name="Tanigami A."/>
            <person name="Fujiwara T."/>
            <person name="Ono T."/>
            <person name="Yamada K."/>
            <person name="Fujii Y."/>
            <person name="Ozaki K."/>
            <person name="Hirao M."/>
            <person name="Ohmori Y."/>
            <person name="Kawabata A."/>
            <person name="Hikiji T."/>
            <person name="Kobatake N."/>
            <person name="Inagaki H."/>
            <person name="Ikema Y."/>
            <person name="Okamoto S."/>
            <person name="Okitani R."/>
            <person name="Kawakami T."/>
            <person name="Noguchi S."/>
            <person name="Itoh T."/>
            <person name="Shigeta K."/>
            <person name="Senba T."/>
            <person name="Matsumura K."/>
            <person name="Nakajima Y."/>
            <person name="Mizuno T."/>
            <person name="Morinaga M."/>
            <person name="Sasaki M."/>
            <person name="Togashi T."/>
            <person name="Oyama M."/>
            <person name="Hata H."/>
            <person name="Watanabe M."/>
            <person name="Komatsu T."/>
            <person name="Mizushima-Sugano J."/>
            <person name="Satoh T."/>
            <person name="Shirai Y."/>
            <person name="Takahashi Y."/>
            <person name="Nakagawa K."/>
            <person name="Okumura K."/>
            <person name="Nagase T."/>
            <person name="Nomura N."/>
            <person name="Kikuchi H."/>
            <person name="Masuho Y."/>
            <person name="Yamashita R."/>
            <person name="Nakai K."/>
            <person name="Yada T."/>
            <person name="Nakamura Y."/>
            <person name="Ohara O."/>
            <person name="Isogai T."/>
            <person name="Sugano S."/>
        </authorList>
    </citation>
    <scope>NUCLEOTIDE SEQUENCE [LARGE SCALE MRNA] (ISOFORMS 1; 2; 3 AND 4)</scope>
    <source>
        <tissue>Brain</tissue>
        <tissue>Pericardium</tissue>
        <tissue>Uterus</tissue>
    </source>
</reference>
<reference key="5">
    <citation type="journal article" date="2006" name="Nature">
        <title>Human chromosome 11 DNA sequence and analysis including novel gene identification.</title>
        <authorList>
            <person name="Taylor T.D."/>
            <person name="Noguchi H."/>
            <person name="Totoki Y."/>
            <person name="Toyoda A."/>
            <person name="Kuroki Y."/>
            <person name="Dewar K."/>
            <person name="Lloyd C."/>
            <person name="Itoh T."/>
            <person name="Takeda T."/>
            <person name="Kim D.-W."/>
            <person name="She X."/>
            <person name="Barlow K.F."/>
            <person name="Bloom T."/>
            <person name="Bruford E."/>
            <person name="Chang J.L."/>
            <person name="Cuomo C.A."/>
            <person name="Eichler E."/>
            <person name="FitzGerald M.G."/>
            <person name="Jaffe D.B."/>
            <person name="LaButti K."/>
            <person name="Nicol R."/>
            <person name="Park H.-S."/>
            <person name="Seaman C."/>
            <person name="Sougnez C."/>
            <person name="Yang X."/>
            <person name="Zimmer A.R."/>
            <person name="Zody M.C."/>
            <person name="Birren B.W."/>
            <person name="Nusbaum C."/>
            <person name="Fujiyama A."/>
            <person name="Hattori M."/>
            <person name="Rogers J."/>
            <person name="Lander E.S."/>
            <person name="Sakaki Y."/>
        </authorList>
    </citation>
    <scope>NUCLEOTIDE SEQUENCE [LARGE SCALE GENOMIC DNA]</scope>
</reference>
<reference key="6">
    <citation type="submission" date="2005-09" db="EMBL/GenBank/DDBJ databases">
        <authorList>
            <person name="Mural R.J."/>
            <person name="Istrail S."/>
            <person name="Sutton G.G."/>
            <person name="Florea L."/>
            <person name="Halpern A.L."/>
            <person name="Mobarry C.M."/>
            <person name="Lippert R."/>
            <person name="Walenz B."/>
            <person name="Shatkay H."/>
            <person name="Dew I."/>
            <person name="Miller J.R."/>
            <person name="Flanigan M.J."/>
            <person name="Edwards N.J."/>
            <person name="Bolanos R."/>
            <person name="Fasulo D."/>
            <person name="Halldorsson B.V."/>
            <person name="Hannenhalli S."/>
            <person name="Turner R."/>
            <person name="Yooseph S."/>
            <person name="Lu F."/>
            <person name="Nusskern D.R."/>
            <person name="Shue B.C."/>
            <person name="Zheng X.H."/>
            <person name="Zhong F."/>
            <person name="Delcher A.L."/>
            <person name="Huson D.H."/>
            <person name="Kravitz S.A."/>
            <person name="Mouchard L."/>
            <person name="Reinert K."/>
            <person name="Remington K.A."/>
            <person name="Clark A.G."/>
            <person name="Waterman M.S."/>
            <person name="Eichler E.E."/>
            <person name="Adams M.D."/>
            <person name="Hunkapiller M.W."/>
            <person name="Myers E.W."/>
            <person name="Venter J.C."/>
        </authorList>
    </citation>
    <scope>NUCLEOTIDE SEQUENCE [LARGE SCALE GENOMIC DNA]</scope>
</reference>
<reference key="7">
    <citation type="journal article" date="2004" name="Genome Res.">
        <title>The status, quality, and expansion of the NIH full-length cDNA project: the Mammalian Gene Collection (MGC).</title>
        <authorList>
            <consortium name="The MGC Project Team"/>
        </authorList>
    </citation>
    <scope>NUCLEOTIDE SEQUENCE [LARGE SCALE MRNA] (ISOFORM 1)</scope>
    <source>
        <tissue>Bone</tissue>
    </source>
</reference>
<reference key="8">
    <citation type="journal article" date="2004" name="Proc. Natl. Acad. Sci. U.S.A.">
        <title>A tagging-via-substrate technology for detection and proteomics of farnesylated proteins.</title>
        <authorList>
            <person name="Kho Y."/>
            <person name="Kim S.C."/>
            <person name="Jiang C."/>
            <person name="Barma D."/>
            <person name="Kwon S.W."/>
            <person name="Cheng J."/>
            <person name="Jaunbergs J."/>
            <person name="Weinbaum C."/>
            <person name="Tamanoi F."/>
            <person name="Falck J."/>
            <person name="Zhao Y."/>
        </authorList>
    </citation>
    <scope>ISOPRENYLATION AT CYS-201</scope>
    <scope>METHYLATION AT CYS-201</scope>
</reference>
<reference key="9">
    <citation type="journal article" date="2006" name="Cell">
        <title>Global, in vivo, and site-specific phosphorylation dynamics in signaling networks.</title>
        <authorList>
            <person name="Olsen J.V."/>
            <person name="Blagoev B."/>
            <person name="Gnad F."/>
            <person name="Macek B."/>
            <person name="Kumar C."/>
            <person name="Mortensen P."/>
            <person name="Mann M."/>
        </authorList>
    </citation>
    <scope>PHOSPHORYLATION [LARGE SCALE ANALYSIS] AT SER-186</scope>
    <scope>IDENTIFICATION BY MASS SPECTROMETRY [LARGE SCALE ANALYSIS]</scope>
    <source>
        <tissue>Cervix carcinoma</tissue>
    </source>
</reference>
<reference key="10">
    <citation type="journal article" date="2008" name="Mol. Cell">
        <title>Kinase-selective enrichment enables quantitative phosphoproteomics of the kinome across the cell cycle.</title>
        <authorList>
            <person name="Daub H."/>
            <person name="Olsen J.V."/>
            <person name="Bairlein M."/>
            <person name="Gnad F."/>
            <person name="Oppermann F.S."/>
            <person name="Korner R."/>
            <person name="Greff Z."/>
            <person name="Keri G."/>
            <person name="Stemmann O."/>
            <person name="Mann M."/>
        </authorList>
    </citation>
    <scope>PHOSPHORYLATION [LARGE SCALE ANALYSIS] AT SER-186</scope>
    <scope>IDENTIFICATION BY MASS SPECTROMETRY [LARGE SCALE ANALYSIS]</scope>
    <source>
        <tissue>Cervix carcinoma</tissue>
    </source>
</reference>
<reference key="11">
    <citation type="journal article" date="2008" name="Proc. Natl. Acad. Sci. U.S.A.">
        <title>A quantitative atlas of mitotic phosphorylation.</title>
        <authorList>
            <person name="Dephoure N."/>
            <person name="Zhou C."/>
            <person name="Villen J."/>
            <person name="Beausoleil S.A."/>
            <person name="Bakalarski C.E."/>
            <person name="Elledge S.J."/>
            <person name="Gygi S.P."/>
        </authorList>
    </citation>
    <scope>PHOSPHORYLATION [LARGE SCALE ANALYSIS] AT SER-186</scope>
    <scope>IDENTIFICATION BY MASS SPECTROMETRY [LARGE SCALE ANALYSIS]</scope>
    <source>
        <tissue>Cervix carcinoma</tissue>
    </source>
</reference>
<reference key="12">
    <citation type="journal article" date="2009" name="Anal. Chem.">
        <title>Lys-N and trypsin cover complementary parts of the phosphoproteome in a refined SCX-based approach.</title>
        <authorList>
            <person name="Gauci S."/>
            <person name="Helbig A.O."/>
            <person name="Slijper M."/>
            <person name="Krijgsveld J."/>
            <person name="Heck A.J."/>
            <person name="Mohammed S."/>
        </authorList>
    </citation>
    <scope>ACETYLATION [LARGE SCALE ANALYSIS] AT ALA-2</scope>
    <scope>CLEAVAGE OF INITIATOR METHIONINE [LARGE SCALE ANALYSIS]</scope>
    <scope>IDENTIFICATION BY MASS SPECTROMETRY [LARGE SCALE ANALYSIS]</scope>
</reference>
<reference key="13">
    <citation type="journal article" date="2009" name="Mol. Cell. Proteomics">
        <title>Large-scale proteomics analysis of the human kinome.</title>
        <authorList>
            <person name="Oppermann F.S."/>
            <person name="Gnad F."/>
            <person name="Olsen J.V."/>
            <person name="Hornberger R."/>
            <person name="Greff Z."/>
            <person name="Keri G."/>
            <person name="Mann M."/>
            <person name="Daub H."/>
        </authorList>
    </citation>
    <scope>PHOSPHORYLATION [LARGE SCALE ANALYSIS] AT SER-186</scope>
    <scope>IDENTIFICATION BY MASS SPECTROMETRY [LARGE SCALE ANALYSIS]</scope>
</reference>
<reference key="14">
    <citation type="journal article" date="2010" name="Sci. Signal.">
        <title>Quantitative phosphoproteomics reveals widespread full phosphorylation site occupancy during mitosis.</title>
        <authorList>
            <person name="Olsen J.V."/>
            <person name="Vermeulen M."/>
            <person name="Santamaria A."/>
            <person name="Kumar C."/>
            <person name="Miller M.L."/>
            <person name="Jensen L.J."/>
            <person name="Gnad F."/>
            <person name="Cox J."/>
            <person name="Jensen T.S."/>
            <person name="Nigg E.A."/>
            <person name="Brunak S."/>
            <person name="Mann M."/>
        </authorList>
    </citation>
    <scope>PHOSPHORYLATION [LARGE SCALE ANALYSIS] AT SER-186</scope>
    <scope>IDENTIFICATION BY MASS SPECTROMETRY [LARGE SCALE ANALYSIS]</scope>
    <source>
        <tissue>Cervix carcinoma</tissue>
    </source>
</reference>
<reference key="15">
    <citation type="journal article" date="2011" name="BMC Syst. Biol.">
        <title>Initial characterization of the human central proteome.</title>
        <authorList>
            <person name="Burkard T.R."/>
            <person name="Planyavsky M."/>
            <person name="Kaupe I."/>
            <person name="Breitwieser F.P."/>
            <person name="Buerckstuemmer T."/>
            <person name="Bennett K.L."/>
            <person name="Superti-Furga G."/>
            <person name="Colinge J."/>
        </authorList>
    </citation>
    <scope>IDENTIFICATION BY MASS SPECTROMETRY [LARGE SCALE ANALYSIS]</scope>
</reference>
<reference key="16">
    <citation type="journal article" date="2013" name="J. Proteome Res.">
        <title>Toward a comprehensive characterization of a human cancer cell phosphoproteome.</title>
        <authorList>
            <person name="Zhou H."/>
            <person name="Di Palma S."/>
            <person name="Preisinger C."/>
            <person name="Peng M."/>
            <person name="Polat A.N."/>
            <person name="Heck A.J."/>
            <person name="Mohammed S."/>
        </authorList>
    </citation>
    <scope>PHOSPHORYLATION [LARGE SCALE ANALYSIS] AT SER-186</scope>
    <scope>IDENTIFICATION BY MASS SPECTROMETRY [LARGE SCALE ANALYSIS]</scope>
    <source>
        <tissue>Cervix carcinoma</tissue>
        <tissue>Erythroleukemia</tissue>
    </source>
</reference>
<reference key="17">
    <citation type="journal article" date="2014" name="J. Proteomics">
        <title>An enzyme assisted RP-RPLC approach for in-depth analysis of human liver phosphoproteome.</title>
        <authorList>
            <person name="Bian Y."/>
            <person name="Song C."/>
            <person name="Cheng K."/>
            <person name="Dong M."/>
            <person name="Wang F."/>
            <person name="Huang J."/>
            <person name="Sun D."/>
            <person name="Wang L."/>
            <person name="Ye M."/>
            <person name="Zou H."/>
        </authorList>
    </citation>
    <scope>PHOSPHORYLATION [LARGE SCALE ANALYSIS] AT SER-186</scope>
    <scope>IDENTIFICATION BY MASS SPECTROMETRY [LARGE SCALE ANALYSIS]</scope>
    <source>
        <tissue>Liver</tissue>
    </source>
</reference>
<reference key="18">
    <citation type="journal article" date="2019" name="Am. J. Hum. Genet.">
        <title>Activating Mutations of RRAS2 Are a Rare Cause of Noonan Syndrome.</title>
        <authorList>
            <person name="Capri Y."/>
            <person name="Flex E."/>
            <person name="Krumbach O.H.F."/>
            <person name="Carpentieri G."/>
            <person name="Cecchetti S."/>
            <person name="Lissewski C."/>
            <person name="Rezaei Adariani S."/>
            <person name="Schanze D."/>
            <person name="Brinkmann J."/>
            <person name="Piard J."/>
            <person name="Pantaleoni F."/>
            <person name="Lepri F.R."/>
            <person name="Goh E.S."/>
            <person name="Chong K."/>
            <person name="Stieglitz E."/>
            <person name="Meyer J."/>
            <person name="Kuechler A."/>
            <person name="Bramswig N.C."/>
            <person name="Sacharow S."/>
            <person name="Strullu M."/>
            <person name="Vial Y."/>
            <person name="Vignal C."/>
            <person name="Kensah G."/>
            <person name="Cuturilo G."/>
            <person name="Kazemein Jasemi N.S."/>
            <person name="Dvorsky R."/>
            <person name="Monaghan K.G."/>
            <person name="Vincent L.M."/>
            <person name="Cave H."/>
            <person name="Verloes A."/>
            <person name="Ahmadian M.R."/>
            <person name="Tartaglia M."/>
            <person name="Zenker M."/>
        </authorList>
    </citation>
    <scope>FUNCTION</scope>
    <scope>SUBCELLULAR LOCATION</scope>
    <scope>CATALYTIC ACTIVITY</scope>
    <scope>INTERACTION WITH RASSF5</scope>
    <scope>INVOLVEMENT IN NS12</scope>
    <scope>VARIANTS NS12 VAL-23; GLY-GLY-GLY-24 INS; GLY-VAL-GLY-26 INS; THR-70 AND LEU-72</scope>
    <scope>CHARACTERIZATION OF VARIANTS NS12 VAL-23; GLY-GLY-GLY-24 INS; GLY-VAL-GLY-26 INS; THR-70 AND LEU-72</scope>
</reference>
<reference key="19">
    <citation type="journal article" date="2019" name="Am. J. Hum. Genet.">
        <title>Germline-Activating RRAS2 Mutations Cause Noonan Syndrome.</title>
        <authorList>
            <person name="Niihori T."/>
            <person name="Nagai K."/>
            <person name="Fujita A."/>
            <person name="Ohashi H."/>
            <person name="Okamoto N."/>
            <person name="Okada S."/>
            <person name="Harada A."/>
            <person name="Kihara H."/>
            <person name="Arbogast T."/>
            <person name="Funayama R."/>
            <person name="Shirota M."/>
            <person name="Nakayama K."/>
            <person name="Abe T."/>
            <person name="Inoue S.I."/>
            <person name="Tsai I.C."/>
            <person name="Matsumoto N."/>
            <person name="Davis E.E."/>
            <person name="Katsanis N."/>
            <person name="Aoki Y."/>
        </authorList>
    </citation>
    <scope>FUNCTION</scope>
    <scope>INVOLVEMENT IN NS12</scope>
    <scope>VARIANTS NS12 GLY-VAL-GLY-26 INS; HIS-72; LEU-72 AND CYS-75</scope>
    <scope>CHARACTERIZATION OF VARIANTS NS12 GLY-VAL-GLY-26 INS; HIS-72; LEU-72 AND CYS-75</scope>
</reference>
<reference key="20">
    <citation type="journal article" date="2017" name="Elife">
        <title>SIRT6 regulates Ras-related protein R-Ras2 by lysine defatty-acylation.</title>
        <authorList>
            <person name="Zhang X."/>
            <person name="Spiegelman N.A."/>
            <person name="Nelson O.D."/>
            <person name="Jing H."/>
            <person name="Lin H."/>
        </authorList>
    </citation>
    <scope>PALMITOYLATION AT LYS-192; LYS-194; LYS-196; LYS-197 AND CYS-199</scope>
    <scope>DEPALMITOYLATION</scope>
    <scope>SUBCELLULAR LOCATION</scope>
    <scope>MUTAGENESIS OF 192-LYS--LYS-197 AND CYS-199</scope>
</reference>
<reference key="21">
    <citation type="journal article" date="2025" name="Nat. Commun.">
        <title>The small GTPase MRAS is a broken switch.</title>
        <authorList>
            <person name="Bernal Astrain G."/>
            <person name="Strakhova R."/>
            <person name="Jo C.H."/>
            <person name="Teszner E."/>
            <person name="Killoran R.C."/>
            <person name="Smith M.J."/>
        </authorList>
    </citation>
    <scope>FUNCTION</scope>
    <scope>CATALYTIC ACTIVITY</scope>
</reference>
<reference evidence="15" key="22">
    <citation type="submission" date="2009-02" db="PDB data bank">
        <title>The crystal structure of the Ras related protein RRAS2 in the GDP bound state.</title>
        <authorList>
            <consortium name="Structural genomics consortium (SGC)"/>
        </authorList>
    </citation>
    <scope>X-RAY CRYSTALLOGRAPHY (1.7 ANGSTROMS) OF 10-181 IN COMPLEX WITH GDP</scope>
</reference>
<comment type="function">
    <text evidence="5 6 7">GTP-binding protein with GTPase activity, involved in the regulation of MAPK signaling pathway and thereby controlling multiple cellular processes (PubMed:31130282, PubMed:31130285, PubMed:39809765). Regulates craniofacial development (PubMed:31130282, PubMed:31130285).</text>
</comment>
<comment type="catalytic activity">
    <reaction evidence="5 7">
        <text>GTP + H2O = GDP + phosphate + H(+)</text>
        <dbReference type="Rhea" id="RHEA:19669"/>
        <dbReference type="ChEBI" id="CHEBI:15377"/>
        <dbReference type="ChEBI" id="CHEBI:15378"/>
        <dbReference type="ChEBI" id="CHEBI:37565"/>
        <dbReference type="ChEBI" id="CHEBI:43474"/>
        <dbReference type="ChEBI" id="CHEBI:58189"/>
        <dbReference type="EC" id="3.6.5.2"/>
    </reaction>
    <physiologicalReaction direction="left-to-right" evidence="5">
        <dbReference type="Rhea" id="RHEA:19670"/>
    </physiologicalReaction>
</comment>
<comment type="subunit">
    <text evidence="5">Interacts with RASSF5.</text>
</comment>
<comment type="interaction">
    <interactant intactId="EBI-491037">
        <id>P62070</id>
    </interactant>
    <interactant intactId="EBI-365961">
        <id>P10398</id>
        <label>ARAF</label>
    </interactant>
    <organismsDiffer>false</organismsDiffer>
    <experiments>3</experiments>
</comment>
<comment type="interaction">
    <interactant intactId="EBI-491037">
        <id>P62070</id>
    </interactant>
    <interactant intactId="EBI-12094670">
        <id>Q8WUI4-6</id>
        <label>HDAC7</label>
    </interactant>
    <organismsDiffer>false</organismsDiffer>
    <experiments>3</experiments>
</comment>
<comment type="interaction">
    <interactant intactId="EBI-491037">
        <id>P62070</id>
    </interactant>
    <interactant intactId="EBI-12832744">
        <id>P52306-5</id>
        <label>RAP1GDS1</label>
    </interactant>
    <organismsDiffer>false</organismsDiffer>
    <experiments>3</experiments>
</comment>
<comment type="interaction">
    <interactant intactId="EBI-491037">
        <id>P62070</id>
    </interactant>
    <interactant intactId="EBI-2856274">
        <id>Q3MIN7</id>
        <label>RGL3</label>
    </interactant>
    <organismsDiffer>false</organismsDiffer>
    <experiments>3</experiments>
</comment>
<comment type="interaction">
    <interactant intactId="EBI-491037">
        <id>P62070</id>
    </interactant>
    <interactant intactId="EBI-366017">
        <id>Q13671</id>
        <label>RIN1</label>
    </interactant>
    <organismsDiffer>false</organismsDiffer>
    <experiments>5</experiments>
</comment>
<comment type="subcellular location">
    <subcellularLocation>
        <location evidence="4 5">Cell membrane</location>
        <topology evidence="3 4">Lipid-anchor</topology>
        <orientation>Cytoplasmic side</orientation>
    </subcellularLocation>
    <subcellularLocation>
        <location evidence="5">Golgi apparatus membrane</location>
        <topology evidence="3">Lipid-anchor</topology>
    </subcellularLocation>
</comment>
<comment type="alternative products">
    <event type="alternative splicing"/>
    <isoform>
        <id>P62070-1</id>
        <name>1</name>
        <sequence type="displayed"/>
    </isoform>
    <isoform>
        <id>P62070-2</id>
        <name>2</name>
        <sequence type="described" ref="VSP_043066"/>
    </isoform>
    <isoform>
        <id>P62070-3</id>
        <name>3</name>
        <sequence type="described" ref="VSP_044485"/>
    </isoform>
    <isoform>
        <id>P62070-4</id>
        <name>4</name>
        <sequence type="described" ref="VSP_055842"/>
    </isoform>
</comment>
<comment type="tissue specificity">
    <text evidence="8">Ubiquitously present in all tissues examined, with the highest levels in heart, placenta, and skeletal muscle. Moderate levels in lung and liver; low levels in brain, kidney, and pancreas.</text>
</comment>
<comment type="PTM">
    <text evidence="3">May be post-translationally modified by both palmitoylation and polyisoprenylation.</text>
</comment>
<comment type="PTM">
    <text evidence="4">Fatty-acylation at Lys-192, Lys-194; lys-196 and Lys-197 is required for localization to the plasma membrane and activity (PubMed:28406396). Defatty-acylated by SIRT6, affecting its localization to the plasma membrane (PubMed:28406396).</text>
</comment>
<comment type="disease" evidence="8">
    <disease id="DI-01655">
        <name>Ovarian cancer</name>
        <acronym>OC</acronym>
        <description>The term ovarian cancer defines malignancies originating from ovarian tissue. Although many histologic types of ovarian tumors have been described, epithelial ovarian carcinoma is the most common form. Ovarian cancers are often asymptomatic and the recognized signs and symptoms, even of late-stage disease, are vague. Consequently, most patients are diagnosed with advanced disease.</description>
        <dbReference type="MIM" id="167000"/>
    </disease>
    <text>Disease susceptibility is associated with variants affecting the gene represented in this entry.</text>
</comment>
<comment type="disease" evidence="5 6">
    <disease id="DI-05677">
        <name>Noonan syndrome 12</name>
        <acronym>NS12</acronym>
        <description>A form of Noonan syndrome, a disease characterized by short stature, facial dysmorphic features such as hypertelorism, a downward eyeslant and low-set posteriorly rotated ears, and a high incidence of congenital heart defects and hypertrophic cardiomyopathy. Other features can include a short neck with webbing or redundancy of skin, deafness, motor delay, variable intellectual deficits, multiple skeletal defects, cryptorchidism, and bleeding diathesis. Individuals with Noonan syndrome are at risk of juvenile myelomonocytic leukemia, a myeloproliferative disorder characterized by excessive production of myelomonocytic cells. NS12 inheritance is autosomal dominant. There is considerable variability in severity.</description>
        <dbReference type="MIM" id="618624"/>
    </disease>
    <text>The disease is caused by variants affecting the gene represented in this entry.</text>
</comment>
<comment type="similarity">
    <text evidence="11">Belongs to the small GTPase superfamily. Ras family.</text>
</comment>
<comment type="sequence caution" evidence="11">
    <conflict type="frameshift">
        <sequence resource="EMBL-CDS" id="AAA36545"/>
    </conflict>
</comment>
<comment type="sequence caution" evidence="11">
    <conflict type="frameshift">
        <sequence resource="EMBL-CDS" id="AAM12638"/>
    </conflict>
</comment>
<evidence type="ECO:0000250" key="1">
    <source>
        <dbReference type="UniProtKB" id="P01112"/>
    </source>
</evidence>
<evidence type="ECO:0000250" key="2">
    <source>
        <dbReference type="UniProtKB" id="P10114"/>
    </source>
</evidence>
<evidence type="ECO:0000269" key="3">
    <source>
    </source>
</evidence>
<evidence type="ECO:0000269" key="4">
    <source>
    </source>
</evidence>
<evidence type="ECO:0000269" key="5">
    <source>
    </source>
</evidence>
<evidence type="ECO:0000269" key="6">
    <source>
    </source>
</evidence>
<evidence type="ECO:0000269" key="7">
    <source>
    </source>
</evidence>
<evidence type="ECO:0000269" key="8">
    <source>
    </source>
</evidence>
<evidence type="ECO:0000269" key="9">
    <source ref="22"/>
</evidence>
<evidence type="ECO:0000303" key="10">
    <source>
    </source>
</evidence>
<evidence type="ECO:0000305" key="11"/>
<evidence type="ECO:0000305" key="12">
    <source>
    </source>
</evidence>
<evidence type="ECO:0000305" key="13">
    <source>
    </source>
</evidence>
<evidence type="ECO:0000312" key="14">
    <source>
        <dbReference type="HGNC" id="HGNC:17271"/>
    </source>
</evidence>
<evidence type="ECO:0007744" key="15">
    <source>
        <dbReference type="PDB" id="2ERY"/>
    </source>
</evidence>
<evidence type="ECO:0007744" key="16">
    <source>
    </source>
</evidence>
<evidence type="ECO:0007744" key="17">
    <source>
    </source>
</evidence>
<evidence type="ECO:0007744" key="18">
    <source>
    </source>
</evidence>
<evidence type="ECO:0007744" key="19">
    <source>
    </source>
</evidence>
<evidence type="ECO:0007744" key="20">
    <source>
    </source>
</evidence>
<evidence type="ECO:0007744" key="21">
    <source>
    </source>
</evidence>
<evidence type="ECO:0007744" key="22">
    <source>
    </source>
</evidence>
<evidence type="ECO:0007744" key="23">
    <source>
    </source>
</evidence>
<evidence type="ECO:0007829" key="24">
    <source>
        <dbReference type="PDB" id="2ERY"/>
    </source>
</evidence>
<name>RRAS2_HUMAN</name>
<sequence length="204" mass="23400">MAAAGWRDGSGQEKYRLVVVGGGGVGKSALTIQFIQSYFVTDYDPTIEDSYTKQCVIDDRAARLDILDTAGQEEFGAMREQYMRTGEGFLLVFSVTDRGSFEEIYKFQRQILRVKDRDEFPMILIGNKADLDHQRQVTQEEGQQLARQLKVTYMEASAKIRMNVDQAFHELVRVIRKFQEQECPPSPEPTRKEKDKKGCHCVIF</sequence>